<name>SYV_PARMW</name>
<sequence length="914" mass="101672">MPELAKTYDPVGTEARWQQAWEDQGAFHPDPKAPGEPFSVVIPPPNVTGSLHMGHAFNTALIDTIVRYQRLAGKNVLCLPGTDHASIAVQTILEKQLKQEGKTRHHLGRDGFLERAWQWKAESGGRIVGQLRRLGYSVDWQRQRFTLDEGLSEAVKEAFVRLHEQGLIYRGEYLVNWCPASGSAVSDLEVEMKEVDGHLWHFRYPLSSGDGHLEVATTRPETMLGDTAVAVNPTDERYAHLVGQTLTLPFVGREIPIVADDHVEKDFGTGCVKVTPAHDPNDFAIGQRHGLPQITVMRKNGTMNKEAGQFEGLDRFEARKAVVAGLDELGLLVKVEDYRHSVPYSDRGKVPVEPLLSTQWFVRTEPLAARCREALEKQDPRFIPERWEKVYRDWLTDIRDWCISRQLWWGHRIPAWFVISETGGKYTDTTPYVVARNEVEALEKAKAKYGAAAVIEQDEDVLDTWFSSGLWPFSTLGWPDAESADLQRWYPTSTLVTGFDIIFFWVARMTMMAGAFTGEMPFQDVYIHGLVRDEQNRKMSKSAGNGIDPLLLIDRYGTDALRFALVREVAGAGQDIRLDYDRKTDTSATVEASRNFANKLWNATRFALMNLGDETPAQLGDPDPAALQLADRWILSRLARVNRETAERYSNYGLGEAAKGLYEFAWNDVCDWYLELSKRRLNPGENPSAEALADQRVAKQVLAKVISQMHQMLHPLMPHLTEELWHSVTGKSETTFLALQPWPALQESALDDALEASFADLIGAIRVVRNLRAVAGLKPSQSVPVRFVTGRGELAAVLNQGTADITALTRAESVAVMAPAEADAAPVAKALAGVSGELQVLLPIEGLVDLDALKGRLEKDIAKAEKEIKGLAGRLGNPNFADKAPPEVVAECQANLDEKQAQADLARKRLADLS</sequence>
<accession>Q7U3N4</accession>
<evidence type="ECO:0000255" key="1">
    <source>
        <dbReference type="HAMAP-Rule" id="MF_02004"/>
    </source>
</evidence>
<dbReference type="EC" id="6.1.1.9" evidence="1"/>
<dbReference type="EMBL" id="BX569695">
    <property type="protein sequence ID" value="CAE08911.1"/>
    <property type="molecule type" value="Genomic_DNA"/>
</dbReference>
<dbReference type="RefSeq" id="WP_011129249.1">
    <property type="nucleotide sequence ID" value="NC_005070.1"/>
</dbReference>
<dbReference type="SMR" id="Q7U3N4"/>
<dbReference type="STRING" id="84588.SYNW2396"/>
<dbReference type="KEGG" id="syw:SYNW2396"/>
<dbReference type="eggNOG" id="COG0525">
    <property type="taxonomic scope" value="Bacteria"/>
</dbReference>
<dbReference type="HOGENOM" id="CLU_001493_0_2_3"/>
<dbReference type="Proteomes" id="UP000001422">
    <property type="component" value="Chromosome"/>
</dbReference>
<dbReference type="GO" id="GO:0005829">
    <property type="term" value="C:cytosol"/>
    <property type="evidence" value="ECO:0007669"/>
    <property type="project" value="TreeGrafter"/>
</dbReference>
<dbReference type="GO" id="GO:0002161">
    <property type="term" value="F:aminoacyl-tRNA deacylase activity"/>
    <property type="evidence" value="ECO:0007669"/>
    <property type="project" value="InterPro"/>
</dbReference>
<dbReference type="GO" id="GO:0005524">
    <property type="term" value="F:ATP binding"/>
    <property type="evidence" value="ECO:0007669"/>
    <property type="project" value="UniProtKB-UniRule"/>
</dbReference>
<dbReference type="GO" id="GO:0004832">
    <property type="term" value="F:valine-tRNA ligase activity"/>
    <property type="evidence" value="ECO:0007669"/>
    <property type="project" value="UniProtKB-UniRule"/>
</dbReference>
<dbReference type="GO" id="GO:0006438">
    <property type="term" value="P:valyl-tRNA aminoacylation"/>
    <property type="evidence" value="ECO:0007669"/>
    <property type="project" value="UniProtKB-UniRule"/>
</dbReference>
<dbReference type="CDD" id="cd07962">
    <property type="entry name" value="Anticodon_Ia_Val"/>
    <property type="match status" value="1"/>
</dbReference>
<dbReference type="CDD" id="cd00817">
    <property type="entry name" value="ValRS_core"/>
    <property type="match status" value="1"/>
</dbReference>
<dbReference type="FunFam" id="1.10.287.380:FF:000001">
    <property type="entry name" value="Valine--tRNA ligase"/>
    <property type="match status" value="1"/>
</dbReference>
<dbReference type="FunFam" id="3.40.50.620:FF:000032">
    <property type="entry name" value="Valine--tRNA ligase"/>
    <property type="match status" value="1"/>
</dbReference>
<dbReference type="FunFam" id="3.40.50.620:FF:000098">
    <property type="entry name" value="Valine--tRNA ligase"/>
    <property type="match status" value="1"/>
</dbReference>
<dbReference type="FunFam" id="3.90.740.10:FF:000005">
    <property type="entry name" value="Valine--tRNA ligase, mitochondrial"/>
    <property type="match status" value="1"/>
</dbReference>
<dbReference type="Gene3D" id="3.40.50.620">
    <property type="entry name" value="HUPs"/>
    <property type="match status" value="2"/>
</dbReference>
<dbReference type="Gene3D" id="1.10.730.10">
    <property type="entry name" value="Isoleucyl-tRNA Synthetase, Domain 1"/>
    <property type="match status" value="1"/>
</dbReference>
<dbReference type="Gene3D" id="1.10.287.380">
    <property type="entry name" value="Valyl-tRNA synthetase, C-terminal domain"/>
    <property type="match status" value="1"/>
</dbReference>
<dbReference type="Gene3D" id="3.90.740.10">
    <property type="entry name" value="Valyl/Leucyl/Isoleucyl-tRNA synthetase, editing domain"/>
    <property type="match status" value="1"/>
</dbReference>
<dbReference type="HAMAP" id="MF_02004">
    <property type="entry name" value="Val_tRNA_synth_type1"/>
    <property type="match status" value="1"/>
</dbReference>
<dbReference type="InterPro" id="IPR001412">
    <property type="entry name" value="aa-tRNA-synth_I_CS"/>
</dbReference>
<dbReference type="InterPro" id="IPR002300">
    <property type="entry name" value="aa-tRNA-synth_Ia"/>
</dbReference>
<dbReference type="InterPro" id="IPR033705">
    <property type="entry name" value="Anticodon_Ia_Val"/>
</dbReference>
<dbReference type="InterPro" id="IPR013155">
    <property type="entry name" value="M/V/L/I-tRNA-synth_anticd-bd"/>
</dbReference>
<dbReference type="InterPro" id="IPR014729">
    <property type="entry name" value="Rossmann-like_a/b/a_fold"/>
</dbReference>
<dbReference type="InterPro" id="IPR010978">
    <property type="entry name" value="tRNA-bd_arm"/>
</dbReference>
<dbReference type="InterPro" id="IPR009080">
    <property type="entry name" value="tRNAsynth_Ia_anticodon-bd"/>
</dbReference>
<dbReference type="InterPro" id="IPR037118">
    <property type="entry name" value="Val-tRNA_synth_C_sf"/>
</dbReference>
<dbReference type="InterPro" id="IPR019499">
    <property type="entry name" value="Val-tRNA_synth_tRNA-bd"/>
</dbReference>
<dbReference type="InterPro" id="IPR009008">
    <property type="entry name" value="Val/Leu/Ile-tRNA-synth_edit"/>
</dbReference>
<dbReference type="InterPro" id="IPR002303">
    <property type="entry name" value="Valyl-tRNA_ligase"/>
</dbReference>
<dbReference type="NCBIfam" id="NF004349">
    <property type="entry name" value="PRK05729.1"/>
    <property type="match status" value="1"/>
</dbReference>
<dbReference type="NCBIfam" id="TIGR00422">
    <property type="entry name" value="valS"/>
    <property type="match status" value="1"/>
</dbReference>
<dbReference type="PANTHER" id="PTHR11946:SF93">
    <property type="entry name" value="VALINE--TRNA LIGASE, CHLOROPLASTIC_MITOCHONDRIAL 2"/>
    <property type="match status" value="1"/>
</dbReference>
<dbReference type="PANTHER" id="PTHR11946">
    <property type="entry name" value="VALYL-TRNA SYNTHETASES"/>
    <property type="match status" value="1"/>
</dbReference>
<dbReference type="Pfam" id="PF08264">
    <property type="entry name" value="Anticodon_1"/>
    <property type="match status" value="1"/>
</dbReference>
<dbReference type="Pfam" id="PF00133">
    <property type="entry name" value="tRNA-synt_1"/>
    <property type="match status" value="1"/>
</dbReference>
<dbReference type="Pfam" id="PF10458">
    <property type="entry name" value="Val_tRNA-synt_C"/>
    <property type="match status" value="1"/>
</dbReference>
<dbReference type="PRINTS" id="PR00986">
    <property type="entry name" value="TRNASYNTHVAL"/>
</dbReference>
<dbReference type="SUPFAM" id="SSF47323">
    <property type="entry name" value="Anticodon-binding domain of a subclass of class I aminoacyl-tRNA synthetases"/>
    <property type="match status" value="1"/>
</dbReference>
<dbReference type="SUPFAM" id="SSF52374">
    <property type="entry name" value="Nucleotidylyl transferase"/>
    <property type="match status" value="1"/>
</dbReference>
<dbReference type="SUPFAM" id="SSF46589">
    <property type="entry name" value="tRNA-binding arm"/>
    <property type="match status" value="1"/>
</dbReference>
<dbReference type="SUPFAM" id="SSF50677">
    <property type="entry name" value="ValRS/IleRS/LeuRS editing domain"/>
    <property type="match status" value="1"/>
</dbReference>
<dbReference type="PROSITE" id="PS00178">
    <property type="entry name" value="AA_TRNA_LIGASE_I"/>
    <property type="match status" value="1"/>
</dbReference>
<reference key="1">
    <citation type="journal article" date="2003" name="Nature">
        <title>The genome of a motile marine Synechococcus.</title>
        <authorList>
            <person name="Palenik B."/>
            <person name="Brahamsha B."/>
            <person name="Larimer F.W."/>
            <person name="Land M.L."/>
            <person name="Hauser L."/>
            <person name="Chain P."/>
            <person name="Lamerdin J.E."/>
            <person name="Regala W."/>
            <person name="Allen E.E."/>
            <person name="McCarren J."/>
            <person name="Paulsen I.T."/>
            <person name="Dufresne A."/>
            <person name="Partensky F."/>
            <person name="Webb E.A."/>
            <person name="Waterbury J."/>
        </authorList>
    </citation>
    <scope>NUCLEOTIDE SEQUENCE [LARGE SCALE GENOMIC DNA]</scope>
    <source>
        <strain>WH8102</strain>
    </source>
</reference>
<comment type="function">
    <text evidence="1">Catalyzes the attachment of valine to tRNA(Val). As ValRS can inadvertently accommodate and process structurally similar amino acids such as threonine, to avoid such errors, it has a 'posttransfer' editing activity that hydrolyzes mischarged Thr-tRNA(Val) in a tRNA-dependent manner.</text>
</comment>
<comment type="catalytic activity">
    <reaction evidence="1">
        <text>tRNA(Val) + L-valine + ATP = L-valyl-tRNA(Val) + AMP + diphosphate</text>
        <dbReference type="Rhea" id="RHEA:10704"/>
        <dbReference type="Rhea" id="RHEA-COMP:9672"/>
        <dbReference type="Rhea" id="RHEA-COMP:9708"/>
        <dbReference type="ChEBI" id="CHEBI:30616"/>
        <dbReference type="ChEBI" id="CHEBI:33019"/>
        <dbReference type="ChEBI" id="CHEBI:57762"/>
        <dbReference type="ChEBI" id="CHEBI:78442"/>
        <dbReference type="ChEBI" id="CHEBI:78537"/>
        <dbReference type="ChEBI" id="CHEBI:456215"/>
        <dbReference type="EC" id="6.1.1.9"/>
    </reaction>
</comment>
<comment type="subunit">
    <text evidence="1">Monomer.</text>
</comment>
<comment type="subcellular location">
    <subcellularLocation>
        <location evidence="1">Cytoplasm</location>
    </subcellularLocation>
</comment>
<comment type="domain">
    <text evidence="1">ValRS has two distinct active sites: one for aminoacylation and one for editing. The misactivated threonine is translocated from the active site to the editing site.</text>
</comment>
<comment type="domain">
    <text evidence="1">The C-terminal coiled-coil domain is crucial for aminoacylation activity.</text>
</comment>
<comment type="similarity">
    <text evidence="1">Belongs to the class-I aminoacyl-tRNA synthetase family. ValS type 1 subfamily.</text>
</comment>
<feature type="chain" id="PRO_0000224587" description="Valine--tRNA ligase">
    <location>
        <begin position="1"/>
        <end position="914"/>
    </location>
</feature>
<feature type="coiled-coil region" evidence="1">
    <location>
        <begin position="847"/>
        <end position="914"/>
    </location>
</feature>
<feature type="short sequence motif" description="'HIGH' region">
    <location>
        <begin position="45"/>
        <end position="55"/>
    </location>
</feature>
<feature type="short sequence motif" description="'KMSKS' region">
    <location>
        <begin position="538"/>
        <end position="542"/>
    </location>
</feature>
<feature type="binding site" evidence="1">
    <location>
        <position position="541"/>
    </location>
    <ligand>
        <name>ATP</name>
        <dbReference type="ChEBI" id="CHEBI:30616"/>
    </ligand>
</feature>
<proteinExistence type="inferred from homology"/>
<keyword id="KW-0030">Aminoacyl-tRNA synthetase</keyword>
<keyword id="KW-0067">ATP-binding</keyword>
<keyword id="KW-0175">Coiled coil</keyword>
<keyword id="KW-0963">Cytoplasm</keyword>
<keyword id="KW-0436">Ligase</keyword>
<keyword id="KW-0547">Nucleotide-binding</keyword>
<keyword id="KW-0648">Protein biosynthesis</keyword>
<organism>
    <name type="scientific">Parasynechococcus marenigrum (strain WH8102)</name>
    <dbReference type="NCBI Taxonomy" id="84588"/>
    <lineage>
        <taxon>Bacteria</taxon>
        <taxon>Bacillati</taxon>
        <taxon>Cyanobacteriota</taxon>
        <taxon>Cyanophyceae</taxon>
        <taxon>Synechococcales</taxon>
        <taxon>Prochlorococcaceae</taxon>
        <taxon>Parasynechococcus</taxon>
        <taxon>Parasynechococcus marenigrum</taxon>
    </lineage>
</organism>
<gene>
    <name evidence="1" type="primary">valS</name>
    <name type="ordered locus">SYNW2396</name>
</gene>
<protein>
    <recommendedName>
        <fullName evidence="1">Valine--tRNA ligase</fullName>
        <ecNumber evidence="1">6.1.1.9</ecNumber>
    </recommendedName>
    <alternativeName>
        <fullName evidence="1">Valyl-tRNA synthetase</fullName>
        <shortName evidence="1">ValRS</shortName>
    </alternativeName>
</protein>